<protein>
    <recommendedName>
        <fullName evidence="1">Large ribosomal subunit protein bL19</fullName>
    </recommendedName>
    <alternativeName>
        <fullName evidence="2">50S ribosomal protein L19</fullName>
    </alternativeName>
</protein>
<keyword id="KW-0687">Ribonucleoprotein</keyword>
<keyword id="KW-0689">Ribosomal protein</keyword>
<organism>
    <name type="scientific">Burkholderia lata (strain ATCC 17760 / DSM 23089 / LMG 22485 / NCIMB 9086 / R18194 / 383)</name>
    <dbReference type="NCBI Taxonomy" id="482957"/>
    <lineage>
        <taxon>Bacteria</taxon>
        <taxon>Pseudomonadati</taxon>
        <taxon>Pseudomonadota</taxon>
        <taxon>Betaproteobacteria</taxon>
        <taxon>Burkholderiales</taxon>
        <taxon>Burkholderiaceae</taxon>
        <taxon>Burkholderia</taxon>
        <taxon>Burkholderia cepacia complex</taxon>
    </lineage>
</organism>
<proteinExistence type="inferred from homology"/>
<feature type="chain" id="PRO_0000226835" description="Large ribosomal subunit protein bL19">
    <location>
        <begin position="1"/>
        <end position="130"/>
    </location>
</feature>
<dbReference type="EMBL" id="CP000151">
    <property type="protein sequence ID" value="ABB07783.1"/>
    <property type="molecule type" value="Genomic_DNA"/>
</dbReference>
<dbReference type="RefSeq" id="WP_011351359.1">
    <property type="nucleotide sequence ID" value="NZ_CADFCT010000007.1"/>
</dbReference>
<dbReference type="SMR" id="Q39ID3"/>
<dbReference type="GeneID" id="45094085"/>
<dbReference type="KEGG" id="bur:Bcep18194_A4186"/>
<dbReference type="PATRIC" id="fig|482957.22.peg.1073"/>
<dbReference type="HOGENOM" id="CLU_103507_1_0_4"/>
<dbReference type="Proteomes" id="UP000002705">
    <property type="component" value="Chromosome 1"/>
</dbReference>
<dbReference type="GO" id="GO:0022625">
    <property type="term" value="C:cytosolic large ribosomal subunit"/>
    <property type="evidence" value="ECO:0007669"/>
    <property type="project" value="TreeGrafter"/>
</dbReference>
<dbReference type="GO" id="GO:0003735">
    <property type="term" value="F:structural constituent of ribosome"/>
    <property type="evidence" value="ECO:0007669"/>
    <property type="project" value="InterPro"/>
</dbReference>
<dbReference type="GO" id="GO:0006412">
    <property type="term" value="P:translation"/>
    <property type="evidence" value="ECO:0007669"/>
    <property type="project" value="UniProtKB-UniRule"/>
</dbReference>
<dbReference type="FunFam" id="2.30.30.790:FF:000001">
    <property type="entry name" value="50S ribosomal protein L19"/>
    <property type="match status" value="1"/>
</dbReference>
<dbReference type="Gene3D" id="2.30.30.790">
    <property type="match status" value="1"/>
</dbReference>
<dbReference type="HAMAP" id="MF_00402">
    <property type="entry name" value="Ribosomal_bL19"/>
    <property type="match status" value="1"/>
</dbReference>
<dbReference type="InterPro" id="IPR001857">
    <property type="entry name" value="Ribosomal_bL19"/>
</dbReference>
<dbReference type="InterPro" id="IPR018257">
    <property type="entry name" value="Ribosomal_bL19_CS"/>
</dbReference>
<dbReference type="InterPro" id="IPR038657">
    <property type="entry name" value="Ribosomal_bL19_sf"/>
</dbReference>
<dbReference type="InterPro" id="IPR008991">
    <property type="entry name" value="Translation_prot_SH3-like_sf"/>
</dbReference>
<dbReference type="NCBIfam" id="TIGR01024">
    <property type="entry name" value="rplS_bact"/>
    <property type="match status" value="1"/>
</dbReference>
<dbReference type="PANTHER" id="PTHR15680:SF9">
    <property type="entry name" value="LARGE RIBOSOMAL SUBUNIT PROTEIN BL19M"/>
    <property type="match status" value="1"/>
</dbReference>
<dbReference type="PANTHER" id="PTHR15680">
    <property type="entry name" value="RIBOSOMAL PROTEIN L19"/>
    <property type="match status" value="1"/>
</dbReference>
<dbReference type="Pfam" id="PF01245">
    <property type="entry name" value="Ribosomal_L19"/>
    <property type="match status" value="1"/>
</dbReference>
<dbReference type="PIRSF" id="PIRSF002191">
    <property type="entry name" value="Ribosomal_L19"/>
    <property type="match status" value="1"/>
</dbReference>
<dbReference type="PRINTS" id="PR00061">
    <property type="entry name" value="RIBOSOMALL19"/>
</dbReference>
<dbReference type="SUPFAM" id="SSF50104">
    <property type="entry name" value="Translation proteins SH3-like domain"/>
    <property type="match status" value="1"/>
</dbReference>
<dbReference type="PROSITE" id="PS01015">
    <property type="entry name" value="RIBOSOMAL_L19"/>
    <property type="match status" value="1"/>
</dbReference>
<gene>
    <name evidence="1" type="primary">rplS</name>
    <name type="ordered locus">Bcep18194_A4186</name>
</gene>
<sequence length="130" mass="14532">MNLIAKLEQEEIERALAGKTIPEFAPGDTVIVNVNVVEGNRKRVQAYEGVVIAIRSRGLNSNFIVRKISSGEGVERTFQTYSPLLASIVVKRRGDVRRAKLYYLRERSGKSARIKEKLVSKDRTAAASQE</sequence>
<comment type="function">
    <text evidence="1">This protein is located at the 30S-50S ribosomal subunit interface and may play a role in the structure and function of the aminoacyl-tRNA binding site.</text>
</comment>
<comment type="similarity">
    <text evidence="1">Belongs to the bacterial ribosomal protein bL19 family.</text>
</comment>
<reference key="1">
    <citation type="submission" date="2005-10" db="EMBL/GenBank/DDBJ databases">
        <title>Complete sequence of chromosome 1 of Burkholderia sp. 383.</title>
        <authorList>
            <consortium name="US DOE Joint Genome Institute"/>
            <person name="Copeland A."/>
            <person name="Lucas S."/>
            <person name="Lapidus A."/>
            <person name="Barry K."/>
            <person name="Detter J.C."/>
            <person name="Glavina T."/>
            <person name="Hammon N."/>
            <person name="Israni S."/>
            <person name="Pitluck S."/>
            <person name="Chain P."/>
            <person name="Malfatti S."/>
            <person name="Shin M."/>
            <person name="Vergez L."/>
            <person name="Schmutz J."/>
            <person name="Larimer F."/>
            <person name="Land M."/>
            <person name="Kyrpides N."/>
            <person name="Lykidis A."/>
            <person name="Richardson P."/>
        </authorList>
    </citation>
    <scope>NUCLEOTIDE SEQUENCE [LARGE SCALE GENOMIC DNA]</scope>
    <source>
        <strain>ATCC 17760 / DSM 23089 / LMG 22485 / NCIMB 9086 / R18194 / 383</strain>
    </source>
</reference>
<accession>Q39ID3</accession>
<name>RL19_BURL3</name>
<evidence type="ECO:0000255" key="1">
    <source>
        <dbReference type="HAMAP-Rule" id="MF_00402"/>
    </source>
</evidence>
<evidence type="ECO:0000305" key="2"/>